<reference key="1">
    <citation type="journal article" date="1999" name="Nature">
        <title>Genomic sequence comparison of two unrelated isolates of the human gastric pathogen Helicobacter pylori.</title>
        <authorList>
            <person name="Alm R.A."/>
            <person name="Ling L.-S.L."/>
            <person name="Moir D.T."/>
            <person name="King B.L."/>
            <person name="Brown E.D."/>
            <person name="Doig P.C."/>
            <person name="Smith D.R."/>
            <person name="Noonan B."/>
            <person name="Guild B.C."/>
            <person name="deJonge B.L."/>
            <person name="Carmel G."/>
            <person name="Tummino P.J."/>
            <person name="Caruso A."/>
            <person name="Uria-Nickelsen M."/>
            <person name="Mills D.M."/>
            <person name="Ives C."/>
            <person name="Gibson R."/>
            <person name="Merberg D."/>
            <person name="Mills S.D."/>
            <person name="Jiang Q."/>
            <person name="Taylor D.E."/>
            <person name="Vovis G.F."/>
            <person name="Trust T.J."/>
        </authorList>
    </citation>
    <scope>NUCLEOTIDE SEQUENCE [LARGE SCALE GENOMIC DNA]</scope>
    <source>
        <strain>J99 / ATCC 700824</strain>
    </source>
</reference>
<name>NUOD_HELPJ</name>
<organism>
    <name type="scientific">Helicobacter pylori (strain J99 / ATCC 700824)</name>
    <name type="common">Campylobacter pylori J99</name>
    <dbReference type="NCBI Taxonomy" id="85963"/>
    <lineage>
        <taxon>Bacteria</taxon>
        <taxon>Pseudomonadati</taxon>
        <taxon>Campylobacterota</taxon>
        <taxon>Epsilonproteobacteria</taxon>
        <taxon>Campylobacterales</taxon>
        <taxon>Helicobacteraceae</taxon>
        <taxon>Helicobacter</taxon>
    </lineage>
</organism>
<sequence length="409" mass="46740">MAQNFTKLNPQFENIIFEHDDNQMILNFGPQHPSSHGQLRLILELEGEKIIKATPEIGYLHRGCEKLGENMTYNEYMPTTDRLDYTSSTSNNYAYAYAVETLLNLEIPRRAQVIRTILLELNRMISHIFFISVHALDVGAMSVFLYAFKTREYGLDLMEDYCGARLTHNAIRIGGVPLDLPPNWLEGLKKFLGEMRECKKLIQGLLDKNRIWRMRLENVGVVTPKMAQSWGMSGIMLRGTGIAYDIRKEEPYELYKELDFDVPVGNYGDSYDRYCLYMLEIDESIRIIEQLIPMYAKTDTPIMAQNPHYISAPKEDIMTQNYALMQHFVLVAQGMRPPVGEVYAPTESPKGELGFFIHSEGEPYPHRLKIRAPSFYHIGALSDILVGQYLADAVTVIGSTNAVFGEVDR</sequence>
<dbReference type="EC" id="7.1.1.-" evidence="1"/>
<dbReference type="EMBL" id="AE001439">
    <property type="protein sequence ID" value="AAD06770.1"/>
    <property type="molecule type" value="Genomic_DNA"/>
</dbReference>
<dbReference type="PIR" id="E71838">
    <property type="entry name" value="E71838"/>
</dbReference>
<dbReference type="RefSeq" id="WP_000068229.1">
    <property type="nucleotide sequence ID" value="NZ_CP011330.1"/>
</dbReference>
<dbReference type="SMR" id="Q9ZJW4"/>
<dbReference type="KEGG" id="hpj:jhp_1184"/>
<dbReference type="PATRIC" id="fig|85963.30.peg.1388"/>
<dbReference type="eggNOG" id="COG0649">
    <property type="taxonomic scope" value="Bacteria"/>
</dbReference>
<dbReference type="Proteomes" id="UP000000804">
    <property type="component" value="Chromosome"/>
</dbReference>
<dbReference type="GO" id="GO:0005886">
    <property type="term" value="C:plasma membrane"/>
    <property type="evidence" value="ECO:0007669"/>
    <property type="project" value="UniProtKB-SubCell"/>
</dbReference>
<dbReference type="GO" id="GO:0051287">
    <property type="term" value="F:NAD binding"/>
    <property type="evidence" value="ECO:0007669"/>
    <property type="project" value="InterPro"/>
</dbReference>
<dbReference type="GO" id="GO:0050136">
    <property type="term" value="F:NADH:ubiquinone reductase (non-electrogenic) activity"/>
    <property type="evidence" value="ECO:0007669"/>
    <property type="project" value="UniProtKB-UniRule"/>
</dbReference>
<dbReference type="GO" id="GO:0048038">
    <property type="term" value="F:quinone binding"/>
    <property type="evidence" value="ECO:0007669"/>
    <property type="project" value="UniProtKB-KW"/>
</dbReference>
<dbReference type="Gene3D" id="1.10.645.10">
    <property type="entry name" value="Cytochrome-c3 Hydrogenase, chain B"/>
    <property type="match status" value="1"/>
</dbReference>
<dbReference type="HAMAP" id="MF_01358">
    <property type="entry name" value="NDH1_NuoD"/>
    <property type="match status" value="1"/>
</dbReference>
<dbReference type="InterPro" id="IPR001135">
    <property type="entry name" value="NADH_Q_OxRdtase_suD"/>
</dbReference>
<dbReference type="InterPro" id="IPR022885">
    <property type="entry name" value="NDH1_su_D/H"/>
</dbReference>
<dbReference type="InterPro" id="IPR029014">
    <property type="entry name" value="NiFe-Hase_large"/>
</dbReference>
<dbReference type="NCBIfam" id="TIGR01962">
    <property type="entry name" value="NuoD"/>
    <property type="match status" value="1"/>
</dbReference>
<dbReference type="NCBIfam" id="NF004739">
    <property type="entry name" value="PRK06075.1"/>
    <property type="match status" value="1"/>
</dbReference>
<dbReference type="PANTHER" id="PTHR11993:SF10">
    <property type="entry name" value="NADH DEHYDROGENASE [UBIQUINONE] IRON-SULFUR PROTEIN 2, MITOCHONDRIAL"/>
    <property type="match status" value="1"/>
</dbReference>
<dbReference type="PANTHER" id="PTHR11993">
    <property type="entry name" value="NADH-UBIQUINONE OXIDOREDUCTASE 49 KDA SUBUNIT"/>
    <property type="match status" value="1"/>
</dbReference>
<dbReference type="Pfam" id="PF00346">
    <property type="entry name" value="Complex1_49kDa"/>
    <property type="match status" value="1"/>
</dbReference>
<dbReference type="SUPFAM" id="SSF56762">
    <property type="entry name" value="HydB/Nqo4-like"/>
    <property type="match status" value="1"/>
</dbReference>
<proteinExistence type="inferred from homology"/>
<evidence type="ECO:0000255" key="1">
    <source>
        <dbReference type="HAMAP-Rule" id="MF_01358"/>
    </source>
</evidence>
<accession>Q9ZJW4</accession>
<protein>
    <recommendedName>
        <fullName evidence="1">NADH-quinone oxidoreductase subunit D</fullName>
        <ecNumber evidence="1">7.1.1.-</ecNumber>
    </recommendedName>
    <alternativeName>
        <fullName evidence="1">NADH dehydrogenase I subunit D</fullName>
    </alternativeName>
    <alternativeName>
        <fullName evidence="1">NDH-1 subunit D</fullName>
    </alternativeName>
</protein>
<feature type="chain" id="PRO_0000371882" description="NADH-quinone oxidoreductase subunit D">
    <location>
        <begin position="1"/>
        <end position="409"/>
    </location>
</feature>
<comment type="function">
    <text evidence="1">NDH-1 shuttles electrons from NADH, via FMN and iron-sulfur (Fe-S) centers, to quinones in the respiratory chain. The immediate electron acceptor for the enzyme in this species is believed to be ubiquinone. Couples the redox reaction to proton translocation (for every two electrons transferred, four hydrogen ions are translocated across the cytoplasmic membrane), and thus conserves the redox energy in a proton gradient.</text>
</comment>
<comment type="catalytic activity">
    <reaction evidence="1">
        <text>a quinone + NADH + 5 H(+)(in) = a quinol + NAD(+) + 4 H(+)(out)</text>
        <dbReference type="Rhea" id="RHEA:57888"/>
        <dbReference type="ChEBI" id="CHEBI:15378"/>
        <dbReference type="ChEBI" id="CHEBI:24646"/>
        <dbReference type="ChEBI" id="CHEBI:57540"/>
        <dbReference type="ChEBI" id="CHEBI:57945"/>
        <dbReference type="ChEBI" id="CHEBI:132124"/>
    </reaction>
</comment>
<comment type="subunit">
    <text evidence="1">NDH-1 is composed of 14 different subunits. Subunits NuoB, C, D, E, F, and G constitute the peripheral sector of the complex.</text>
</comment>
<comment type="subcellular location">
    <subcellularLocation>
        <location evidence="1">Cell inner membrane</location>
        <topology evidence="1">Peripheral membrane protein</topology>
        <orientation evidence="1">Cytoplasmic side</orientation>
    </subcellularLocation>
</comment>
<comment type="similarity">
    <text evidence="1">Belongs to the complex I 49 kDa subunit family.</text>
</comment>
<gene>
    <name evidence="1" type="primary">nuoD</name>
    <name type="ordered locus">jhp_1184</name>
</gene>
<keyword id="KW-0997">Cell inner membrane</keyword>
<keyword id="KW-1003">Cell membrane</keyword>
<keyword id="KW-0472">Membrane</keyword>
<keyword id="KW-0520">NAD</keyword>
<keyword id="KW-0874">Quinone</keyword>
<keyword id="KW-1278">Translocase</keyword>
<keyword id="KW-0813">Transport</keyword>
<keyword id="KW-0830">Ubiquinone</keyword>